<evidence type="ECO:0000255" key="1">
    <source>
        <dbReference type="HAMAP-Rule" id="MF_00332"/>
    </source>
</evidence>
<evidence type="ECO:0000256" key="2">
    <source>
        <dbReference type="SAM" id="MobiDB-lite"/>
    </source>
</evidence>
<name>DNAK_BACC3</name>
<gene>
    <name evidence="1" type="primary">dnaK</name>
    <name type="ordered locus">BCA_4425</name>
</gene>
<protein>
    <recommendedName>
        <fullName evidence="1">Chaperone protein DnaK</fullName>
    </recommendedName>
    <alternativeName>
        <fullName evidence="1">HSP70</fullName>
    </alternativeName>
    <alternativeName>
        <fullName evidence="1">Heat shock 70 kDa protein</fullName>
    </alternativeName>
    <alternativeName>
        <fullName evidence="1">Heat shock protein 70</fullName>
    </alternativeName>
</protein>
<accession>C1ESK8</accession>
<keyword id="KW-0067">ATP-binding</keyword>
<keyword id="KW-0143">Chaperone</keyword>
<keyword id="KW-0547">Nucleotide-binding</keyword>
<keyword id="KW-0597">Phosphoprotein</keyword>
<keyword id="KW-0346">Stress response</keyword>
<comment type="function">
    <text evidence="1">Acts as a chaperone.</text>
</comment>
<comment type="induction">
    <text evidence="1">By stress conditions e.g. heat shock.</text>
</comment>
<comment type="similarity">
    <text evidence="1">Belongs to the heat shock protein 70 family.</text>
</comment>
<reference key="1">
    <citation type="submission" date="2009-02" db="EMBL/GenBank/DDBJ databases">
        <title>Genome sequence of Bacillus cereus 03BB102.</title>
        <authorList>
            <person name="Dodson R.J."/>
            <person name="Jackson P."/>
            <person name="Munk A.C."/>
            <person name="Brettin T."/>
            <person name="Bruce D."/>
            <person name="Detter C."/>
            <person name="Tapia R."/>
            <person name="Han C."/>
            <person name="Sutton G."/>
            <person name="Sims D."/>
        </authorList>
    </citation>
    <scope>NUCLEOTIDE SEQUENCE [LARGE SCALE GENOMIC DNA]</scope>
    <source>
        <strain>03BB102</strain>
    </source>
</reference>
<organism>
    <name type="scientific">Bacillus cereus (strain 03BB102)</name>
    <dbReference type="NCBI Taxonomy" id="572264"/>
    <lineage>
        <taxon>Bacteria</taxon>
        <taxon>Bacillati</taxon>
        <taxon>Bacillota</taxon>
        <taxon>Bacilli</taxon>
        <taxon>Bacillales</taxon>
        <taxon>Bacillaceae</taxon>
        <taxon>Bacillus</taxon>
        <taxon>Bacillus cereus group</taxon>
    </lineage>
</organism>
<sequence>MSKIIGIDLGTTNSCVAVMEGGEPKVIPNPEGNRTTPSVVAFKNEERQVGEVAKRQAITNPNTIMSVKRHMGTDYKVEVEGKDYTPQEISAIILQNLKASAEAYLGETVTKAVITVPAYFNDAERQATKDAGRIAGLEVERIINEPTAAALAYGLEKQDEEQKILVYDLGGGTFDVSILELADGTFEVISTAGDNRLGGDDFDQVIIDHLVAEFKKENNIDLSQDKMALQRLKDAAEKAKKDLSGVTQTQISLPFISAGAAGPLHLELTLTRAKFEELSAGLVERTLEPTRRALKDAGFAPSELDKVILVGGSTRIPAVQEAIKRETGKEPYKGVNPDEVVALGAAVQGGVLTGDVEGVLLLDVTPLSLGIETMGGVFTKLIERNTTIPTSKSQVFSTAADNQPAVDIHVLQGERPMSADNKTLGRFQLTDLPPAPRGIPQIEVTFDIDANGIVNVRAKDLGTSKEQAITIQSSSGLSDEEVERMVQEAEANADADQKRKEEVELRNEADQLVFQTDKVVKDLEGKVDAAEVAKATEAKEALQAAIEKNELEEIRAKKDALQEIVQQLTVKLYEQAQAAAGQAEGAEGAQDAGAKKDNVVDAEFEEVKEDK</sequence>
<feature type="chain" id="PRO_1000133130" description="Chaperone protein DnaK">
    <location>
        <begin position="1"/>
        <end position="611"/>
    </location>
</feature>
<feature type="region of interest" description="Disordered" evidence="2">
    <location>
        <begin position="577"/>
        <end position="598"/>
    </location>
</feature>
<feature type="compositionally biased region" description="Low complexity" evidence="2">
    <location>
        <begin position="577"/>
        <end position="592"/>
    </location>
</feature>
<feature type="modified residue" description="Phosphothreonine; by autocatalysis" evidence="1">
    <location>
        <position position="173"/>
    </location>
</feature>
<proteinExistence type="inferred from homology"/>
<dbReference type="EMBL" id="CP001407">
    <property type="protein sequence ID" value="ACO27121.1"/>
    <property type="molecule type" value="Genomic_DNA"/>
</dbReference>
<dbReference type="RefSeq" id="WP_000034699.1">
    <property type="nucleotide sequence ID" value="NZ_CP009318.1"/>
</dbReference>
<dbReference type="SMR" id="C1ESK8"/>
<dbReference type="GeneID" id="45024191"/>
<dbReference type="KEGG" id="bcx:BCA_4425"/>
<dbReference type="PATRIC" id="fig|572264.18.peg.4373"/>
<dbReference type="Proteomes" id="UP000002210">
    <property type="component" value="Chromosome"/>
</dbReference>
<dbReference type="GO" id="GO:0005524">
    <property type="term" value="F:ATP binding"/>
    <property type="evidence" value="ECO:0007669"/>
    <property type="project" value="UniProtKB-UniRule"/>
</dbReference>
<dbReference type="GO" id="GO:0140662">
    <property type="term" value="F:ATP-dependent protein folding chaperone"/>
    <property type="evidence" value="ECO:0007669"/>
    <property type="project" value="InterPro"/>
</dbReference>
<dbReference type="GO" id="GO:0051082">
    <property type="term" value="F:unfolded protein binding"/>
    <property type="evidence" value="ECO:0007669"/>
    <property type="project" value="InterPro"/>
</dbReference>
<dbReference type="CDD" id="cd10234">
    <property type="entry name" value="ASKHA_NBD_HSP70_DnaK-like"/>
    <property type="match status" value="1"/>
</dbReference>
<dbReference type="FunFam" id="2.60.34.10:FF:000014">
    <property type="entry name" value="Chaperone protein DnaK HSP70"/>
    <property type="match status" value="1"/>
</dbReference>
<dbReference type="FunFam" id="1.20.1270.10:FF:000004">
    <property type="entry name" value="Molecular chaperone DnaK"/>
    <property type="match status" value="1"/>
</dbReference>
<dbReference type="FunFam" id="3.30.420.40:FF:000071">
    <property type="entry name" value="Molecular chaperone DnaK"/>
    <property type="match status" value="1"/>
</dbReference>
<dbReference type="FunFam" id="3.90.640.10:FF:000003">
    <property type="entry name" value="Molecular chaperone DnaK"/>
    <property type="match status" value="1"/>
</dbReference>
<dbReference type="Gene3D" id="1.20.1270.10">
    <property type="match status" value="1"/>
</dbReference>
<dbReference type="Gene3D" id="3.30.420.40">
    <property type="match status" value="2"/>
</dbReference>
<dbReference type="Gene3D" id="3.90.640.10">
    <property type="entry name" value="Actin, Chain A, domain 4"/>
    <property type="match status" value="1"/>
</dbReference>
<dbReference type="Gene3D" id="2.60.34.10">
    <property type="entry name" value="Substrate Binding Domain Of DNAk, Chain A, domain 1"/>
    <property type="match status" value="1"/>
</dbReference>
<dbReference type="HAMAP" id="MF_00332">
    <property type="entry name" value="DnaK"/>
    <property type="match status" value="1"/>
</dbReference>
<dbReference type="InterPro" id="IPR043129">
    <property type="entry name" value="ATPase_NBD"/>
</dbReference>
<dbReference type="InterPro" id="IPR012725">
    <property type="entry name" value="Chaperone_DnaK"/>
</dbReference>
<dbReference type="InterPro" id="IPR018181">
    <property type="entry name" value="Heat_shock_70_CS"/>
</dbReference>
<dbReference type="InterPro" id="IPR029048">
    <property type="entry name" value="HSP70_C_sf"/>
</dbReference>
<dbReference type="InterPro" id="IPR029047">
    <property type="entry name" value="HSP70_peptide-bd_sf"/>
</dbReference>
<dbReference type="InterPro" id="IPR013126">
    <property type="entry name" value="Hsp_70_fam"/>
</dbReference>
<dbReference type="NCBIfam" id="NF001413">
    <property type="entry name" value="PRK00290.1"/>
    <property type="match status" value="1"/>
</dbReference>
<dbReference type="NCBIfam" id="TIGR02350">
    <property type="entry name" value="prok_dnaK"/>
    <property type="match status" value="1"/>
</dbReference>
<dbReference type="PANTHER" id="PTHR19375">
    <property type="entry name" value="HEAT SHOCK PROTEIN 70KDA"/>
    <property type="match status" value="1"/>
</dbReference>
<dbReference type="Pfam" id="PF00012">
    <property type="entry name" value="HSP70"/>
    <property type="match status" value="1"/>
</dbReference>
<dbReference type="PRINTS" id="PR00301">
    <property type="entry name" value="HEATSHOCK70"/>
</dbReference>
<dbReference type="SUPFAM" id="SSF53067">
    <property type="entry name" value="Actin-like ATPase domain"/>
    <property type="match status" value="2"/>
</dbReference>
<dbReference type="SUPFAM" id="SSF100934">
    <property type="entry name" value="Heat shock protein 70kD (HSP70), C-terminal subdomain"/>
    <property type="match status" value="1"/>
</dbReference>
<dbReference type="SUPFAM" id="SSF100920">
    <property type="entry name" value="Heat shock protein 70kD (HSP70), peptide-binding domain"/>
    <property type="match status" value="1"/>
</dbReference>
<dbReference type="PROSITE" id="PS00297">
    <property type="entry name" value="HSP70_1"/>
    <property type="match status" value="1"/>
</dbReference>
<dbReference type="PROSITE" id="PS00329">
    <property type="entry name" value="HSP70_2"/>
    <property type="match status" value="1"/>
</dbReference>
<dbReference type="PROSITE" id="PS01036">
    <property type="entry name" value="HSP70_3"/>
    <property type="match status" value="1"/>
</dbReference>